<proteinExistence type="inferred from homology"/>
<keyword id="KW-0997">Cell inner membrane</keyword>
<keyword id="KW-1003">Cell membrane</keyword>
<keyword id="KW-0249">Electron transport</keyword>
<keyword id="KW-0472">Membrane</keyword>
<keyword id="KW-1185">Reference proteome</keyword>
<keyword id="KW-1278">Translocase</keyword>
<keyword id="KW-0812">Transmembrane</keyword>
<keyword id="KW-1133">Transmembrane helix</keyword>
<keyword id="KW-0813">Transport</keyword>
<name>RNFA_VIBCH</name>
<sequence>MTEYLLLLIGTVLVNNFVLVKFLGLCPFMGVSKKLETAIGMGLATTFVLTLASVCAYLVESYVLRPLGIEYLRTMSFILVIAVVVQFTEMVVHKTSPTLYRLLGIFLPLITTNCAVLGVALLNINENHNFIQSIIYGFGAAVGFSLVLILFASMRERIHVADVPAPFKGASIAMITAGLMSLAFMGFTGLVKL</sequence>
<dbReference type="EC" id="7.-.-.-" evidence="1"/>
<dbReference type="EMBL" id="AE003852">
    <property type="protein sequence ID" value="AAF94178.1"/>
    <property type="status" value="ALT_INIT"/>
    <property type="molecule type" value="Genomic_DNA"/>
</dbReference>
<dbReference type="PIR" id="G82252">
    <property type="entry name" value="G82252"/>
</dbReference>
<dbReference type="RefSeq" id="NP_230663.2">
    <property type="nucleotide sequence ID" value="NC_002505.1"/>
</dbReference>
<dbReference type="SMR" id="Q9KT86"/>
<dbReference type="STRING" id="243277.VC_1017"/>
<dbReference type="DNASU" id="2614288"/>
<dbReference type="EnsemblBacteria" id="AAF94178">
    <property type="protein sequence ID" value="AAF94178"/>
    <property type="gene ID" value="VC_1017"/>
</dbReference>
<dbReference type="KEGG" id="vch:VC_1017"/>
<dbReference type="PATRIC" id="fig|243277.26.peg.971"/>
<dbReference type="eggNOG" id="COG4657">
    <property type="taxonomic scope" value="Bacteria"/>
</dbReference>
<dbReference type="HOGENOM" id="CLU_095255_1_0_6"/>
<dbReference type="Proteomes" id="UP000000584">
    <property type="component" value="Chromosome 1"/>
</dbReference>
<dbReference type="GO" id="GO:0005886">
    <property type="term" value="C:plasma membrane"/>
    <property type="evidence" value="ECO:0000318"/>
    <property type="project" value="GO_Central"/>
</dbReference>
<dbReference type="GO" id="GO:0022900">
    <property type="term" value="P:electron transport chain"/>
    <property type="evidence" value="ECO:0007669"/>
    <property type="project" value="UniProtKB-UniRule"/>
</dbReference>
<dbReference type="HAMAP" id="MF_00459">
    <property type="entry name" value="RsxA_RnfA"/>
    <property type="match status" value="1"/>
</dbReference>
<dbReference type="InterPro" id="IPR011293">
    <property type="entry name" value="Ion_transpt_RnfA/RsxA"/>
</dbReference>
<dbReference type="InterPro" id="IPR003667">
    <property type="entry name" value="NqrDE/RnfAE"/>
</dbReference>
<dbReference type="InterPro" id="IPR050133">
    <property type="entry name" value="NqrDE/RnfAE_oxidrdctase"/>
</dbReference>
<dbReference type="NCBIfam" id="NF003481">
    <property type="entry name" value="PRK05151.1"/>
    <property type="match status" value="1"/>
</dbReference>
<dbReference type="NCBIfam" id="TIGR01943">
    <property type="entry name" value="rnfA"/>
    <property type="match status" value="1"/>
</dbReference>
<dbReference type="PANTHER" id="PTHR30335">
    <property type="entry name" value="INTEGRAL MEMBRANE PROTEIN OF SOXR-REDUCING COMPLEX"/>
    <property type="match status" value="1"/>
</dbReference>
<dbReference type="PANTHER" id="PTHR30335:SF0">
    <property type="entry name" value="ION-TRANSLOCATING OXIDOREDUCTASE COMPLEX SUBUNIT A"/>
    <property type="match status" value="1"/>
</dbReference>
<dbReference type="Pfam" id="PF02508">
    <property type="entry name" value="Rnf-Nqr"/>
    <property type="match status" value="1"/>
</dbReference>
<dbReference type="PIRSF" id="PIRSF006102">
    <property type="entry name" value="NQR_DE"/>
    <property type="match status" value="1"/>
</dbReference>
<feature type="chain" id="PRO_0000214299" description="Ion-translocating oxidoreductase complex subunit A">
    <location>
        <begin position="1"/>
        <end position="193"/>
    </location>
</feature>
<feature type="transmembrane region" description="Helical" evidence="1">
    <location>
        <begin position="5"/>
        <end position="25"/>
    </location>
</feature>
<feature type="transmembrane region" description="Helical" evidence="1">
    <location>
        <begin position="39"/>
        <end position="59"/>
    </location>
</feature>
<feature type="transmembrane region" description="Helical" evidence="1">
    <location>
        <begin position="67"/>
        <end position="87"/>
    </location>
</feature>
<feature type="transmembrane region" description="Helical" evidence="1">
    <location>
        <begin position="102"/>
        <end position="122"/>
    </location>
</feature>
<feature type="transmembrane region" description="Helical" evidence="1">
    <location>
        <begin position="134"/>
        <end position="154"/>
    </location>
</feature>
<feature type="transmembrane region" description="Helical" evidence="1">
    <location>
        <begin position="171"/>
        <end position="191"/>
    </location>
</feature>
<protein>
    <recommendedName>
        <fullName evidence="1">Ion-translocating oxidoreductase complex subunit A</fullName>
        <ecNumber evidence="1">7.-.-.-</ecNumber>
    </recommendedName>
    <alternativeName>
        <fullName evidence="1">Rnf electron transport complex subunit A</fullName>
    </alternativeName>
</protein>
<reference key="1">
    <citation type="journal article" date="2000" name="Nature">
        <title>DNA sequence of both chromosomes of the cholera pathogen Vibrio cholerae.</title>
        <authorList>
            <person name="Heidelberg J.F."/>
            <person name="Eisen J.A."/>
            <person name="Nelson W.C."/>
            <person name="Clayton R.A."/>
            <person name="Gwinn M.L."/>
            <person name="Dodson R.J."/>
            <person name="Haft D.H."/>
            <person name="Hickey E.K."/>
            <person name="Peterson J.D."/>
            <person name="Umayam L.A."/>
            <person name="Gill S.R."/>
            <person name="Nelson K.E."/>
            <person name="Read T.D."/>
            <person name="Tettelin H."/>
            <person name="Richardson D.L."/>
            <person name="Ermolaeva M.D."/>
            <person name="Vamathevan J.J."/>
            <person name="Bass S."/>
            <person name="Qin H."/>
            <person name="Dragoi I."/>
            <person name="Sellers P."/>
            <person name="McDonald L.A."/>
            <person name="Utterback T.R."/>
            <person name="Fleischmann R.D."/>
            <person name="Nierman W.C."/>
            <person name="White O."/>
            <person name="Salzberg S.L."/>
            <person name="Smith H.O."/>
            <person name="Colwell R.R."/>
            <person name="Mekalanos J.J."/>
            <person name="Venter J.C."/>
            <person name="Fraser C.M."/>
        </authorList>
    </citation>
    <scope>NUCLEOTIDE SEQUENCE [LARGE SCALE GENOMIC DNA]</scope>
    <source>
        <strain>ATCC 39315 / El Tor Inaba N16961</strain>
    </source>
</reference>
<accession>Q9KT86</accession>
<comment type="function">
    <text evidence="1">Part of a membrane-bound complex that couples electron transfer with translocation of ions across the membrane.</text>
</comment>
<comment type="subunit">
    <text evidence="1">The complex is composed of six subunits: RnfA, RnfB, RnfC, RnfD, RnfE and RnfG.</text>
</comment>
<comment type="subcellular location">
    <subcellularLocation>
        <location evidence="1">Cell inner membrane</location>
        <topology evidence="1">Multi-pass membrane protein</topology>
    </subcellularLocation>
</comment>
<comment type="similarity">
    <text evidence="1">Belongs to the NqrDE/RnfAE family.</text>
</comment>
<comment type="sequence caution" evidence="2">
    <conflict type="erroneous initiation">
        <sequence resource="EMBL-CDS" id="AAF94178"/>
    </conflict>
</comment>
<gene>
    <name evidence="1" type="primary">rnfA</name>
    <name type="ordered locus">VC_1017</name>
</gene>
<organism>
    <name type="scientific">Vibrio cholerae serotype O1 (strain ATCC 39315 / El Tor Inaba N16961)</name>
    <dbReference type="NCBI Taxonomy" id="243277"/>
    <lineage>
        <taxon>Bacteria</taxon>
        <taxon>Pseudomonadati</taxon>
        <taxon>Pseudomonadota</taxon>
        <taxon>Gammaproteobacteria</taxon>
        <taxon>Vibrionales</taxon>
        <taxon>Vibrionaceae</taxon>
        <taxon>Vibrio</taxon>
    </lineage>
</organism>
<evidence type="ECO:0000255" key="1">
    <source>
        <dbReference type="HAMAP-Rule" id="MF_00459"/>
    </source>
</evidence>
<evidence type="ECO:0000305" key="2"/>